<feature type="chain" id="PRO_1000193084" description="Dihydroorotase">
    <location>
        <begin position="1"/>
        <end position="342"/>
    </location>
</feature>
<feature type="active site" evidence="1">
    <location>
        <position position="246"/>
    </location>
</feature>
<feature type="binding site" evidence="1">
    <location>
        <position position="13"/>
    </location>
    <ligand>
        <name>Zn(2+)</name>
        <dbReference type="ChEBI" id="CHEBI:29105"/>
        <label>1</label>
    </ligand>
</feature>
<feature type="binding site" evidence="1">
    <location>
        <begin position="15"/>
        <end position="17"/>
    </location>
    <ligand>
        <name>substrate</name>
    </ligand>
</feature>
<feature type="binding site" evidence="1">
    <location>
        <position position="15"/>
    </location>
    <ligand>
        <name>Zn(2+)</name>
        <dbReference type="ChEBI" id="CHEBI:29105"/>
        <label>1</label>
    </ligand>
</feature>
<feature type="binding site" evidence="1">
    <location>
        <position position="41"/>
    </location>
    <ligand>
        <name>substrate</name>
    </ligand>
</feature>
<feature type="binding site" description="via carbamate group" evidence="1">
    <location>
        <position position="98"/>
    </location>
    <ligand>
        <name>Zn(2+)</name>
        <dbReference type="ChEBI" id="CHEBI:29105"/>
        <label>1</label>
    </ligand>
</feature>
<feature type="binding site" description="via carbamate group" evidence="1">
    <location>
        <position position="98"/>
    </location>
    <ligand>
        <name>Zn(2+)</name>
        <dbReference type="ChEBI" id="CHEBI:29105"/>
        <label>2</label>
    </ligand>
</feature>
<feature type="binding site" evidence="1">
    <location>
        <position position="135"/>
    </location>
    <ligand>
        <name>substrate</name>
    </ligand>
</feature>
<feature type="binding site" evidence="1">
    <location>
        <position position="135"/>
    </location>
    <ligand>
        <name>Zn(2+)</name>
        <dbReference type="ChEBI" id="CHEBI:29105"/>
        <label>2</label>
    </ligand>
</feature>
<feature type="binding site" evidence="1">
    <location>
        <position position="173"/>
    </location>
    <ligand>
        <name>Zn(2+)</name>
        <dbReference type="ChEBI" id="CHEBI:29105"/>
        <label>2</label>
    </ligand>
</feature>
<feature type="binding site" evidence="1">
    <location>
        <position position="218"/>
    </location>
    <ligand>
        <name>substrate</name>
    </ligand>
</feature>
<feature type="binding site" evidence="1">
    <location>
        <position position="246"/>
    </location>
    <ligand>
        <name>Zn(2+)</name>
        <dbReference type="ChEBI" id="CHEBI:29105"/>
        <label>1</label>
    </ligand>
</feature>
<feature type="binding site" evidence="1">
    <location>
        <position position="250"/>
    </location>
    <ligand>
        <name>substrate</name>
    </ligand>
</feature>
<feature type="binding site" evidence="1">
    <location>
        <position position="262"/>
    </location>
    <ligand>
        <name>substrate</name>
    </ligand>
</feature>
<feature type="modified residue" description="N6-carboxylysine" evidence="1">
    <location>
        <position position="98"/>
    </location>
</feature>
<accession>B7VQP0</accession>
<protein>
    <recommendedName>
        <fullName evidence="1">Dihydroorotase</fullName>
        <shortName evidence="1">DHOase</shortName>
        <ecNumber evidence="1">3.5.2.3</ecNumber>
    </recommendedName>
</protein>
<name>PYRC_VIBA3</name>
<proteinExistence type="inferred from homology"/>
<reference key="1">
    <citation type="submission" date="2009-02" db="EMBL/GenBank/DDBJ databases">
        <title>Vibrio splendidus str. LGP32 complete genome.</title>
        <authorList>
            <person name="Mazel D."/>
            <person name="Le Roux F."/>
        </authorList>
    </citation>
    <scope>NUCLEOTIDE SEQUENCE [LARGE SCALE GENOMIC DNA]</scope>
    <source>
        <strain>LGP32</strain>
    </source>
</reference>
<gene>
    <name evidence="1" type="primary">pyrC</name>
    <name type="ordered locus">VS_II0272</name>
</gene>
<sequence length="342" mass="37599">MTQLTITRPDDWHVHLRDGEVLKDTVRDISRYNGRALIMPNTIPPVTDTEMALAYRERIMAEQPSEQFQPLMALYLTDNTTPDEIRKAKESGAVVAAKLYPAGATTNSDSGVTSAQKIYHVLEAMQEVGMLLLVHGEVTAHDVDIFDREKEFLDTVLAPIVNDFPNLKIVLEHITTADAATFVKNANENVAATITAHHLLYNRNHMLVGGIKPHFYCLPILKRNTHQLALIEAATSGSKKFFLGTDSAPHAKGAKESACGCAGSYTAHAAVELYAEVFDLEGKIENLEAFASHNGPDFYGMPRNADTITLVKEEWNVAETMPFGSDIVVPIRGGETIAWAVK</sequence>
<comment type="function">
    <text evidence="1">Catalyzes the reversible cyclization of carbamoyl aspartate to dihydroorotate.</text>
</comment>
<comment type="catalytic activity">
    <reaction evidence="1">
        <text>(S)-dihydroorotate + H2O = N-carbamoyl-L-aspartate + H(+)</text>
        <dbReference type="Rhea" id="RHEA:24296"/>
        <dbReference type="ChEBI" id="CHEBI:15377"/>
        <dbReference type="ChEBI" id="CHEBI:15378"/>
        <dbReference type="ChEBI" id="CHEBI:30864"/>
        <dbReference type="ChEBI" id="CHEBI:32814"/>
        <dbReference type="EC" id="3.5.2.3"/>
    </reaction>
</comment>
<comment type="cofactor">
    <cofactor evidence="1">
        <name>Zn(2+)</name>
        <dbReference type="ChEBI" id="CHEBI:29105"/>
    </cofactor>
    <text evidence="1">Binds 2 Zn(2+) ions per subunit.</text>
</comment>
<comment type="pathway">
    <text evidence="1">Pyrimidine metabolism; UMP biosynthesis via de novo pathway; (S)-dihydroorotate from bicarbonate: step 3/3.</text>
</comment>
<comment type="subunit">
    <text evidence="1">Homodimer.</text>
</comment>
<comment type="similarity">
    <text evidence="1">Belongs to the metallo-dependent hydrolases superfamily. DHOase family. Class II DHOase subfamily.</text>
</comment>
<keyword id="KW-0378">Hydrolase</keyword>
<keyword id="KW-0479">Metal-binding</keyword>
<keyword id="KW-0665">Pyrimidine biosynthesis</keyword>
<keyword id="KW-0862">Zinc</keyword>
<organism>
    <name type="scientific">Vibrio atlanticus (strain LGP32)</name>
    <name type="common">Vibrio splendidus (strain Mel32)</name>
    <dbReference type="NCBI Taxonomy" id="575788"/>
    <lineage>
        <taxon>Bacteria</taxon>
        <taxon>Pseudomonadati</taxon>
        <taxon>Pseudomonadota</taxon>
        <taxon>Gammaproteobacteria</taxon>
        <taxon>Vibrionales</taxon>
        <taxon>Vibrionaceae</taxon>
        <taxon>Vibrio</taxon>
    </lineage>
</organism>
<evidence type="ECO:0000255" key="1">
    <source>
        <dbReference type="HAMAP-Rule" id="MF_00219"/>
    </source>
</evidence>
<dbReference type="EC" id="3.5.2.3" evidence="1"/>
<dbReference type="EMBL" id="FM954973">
    <property type="protein sequence ID" value="CAV25656.1"/>
    <property type="molecule type" value="Genomic_DNA"/>
</dbReference>
<dbReference type="SMR" id="B7VQP0"/>
<dbReference type="STRING" id="575788.VS_II0272"/>
<dbReference type="MEROPS" id="M38.A02"/>
<dbReference type="KEGG" id="vsp:VS_II0272"/>
<dbReference type="eggNOG" id="COG0418">
    <property type="taxonomic scope" value="Bacteria"/>
</dbReference>
<dbReference type="HOGENOM" id="CLU_041558_1_0_6"/>
<dbReference type="UniPathway" id="UPA00070">
    <property type="reaction ID" value="UER00117"/>
</dbReference>
<dbReference type="Proteomes" id="UP000009100">
    <property type="component" value="Chromosome 2"/>
</dbReference>
<dbReference type="GO" id="GO:0005829">
    <property type="term" value="C:cytosol"/>
    <property type="evidence" value="ECO:0007669"/>
    <property type="project" value="TreeGrafter"/>
</dbReference>
<dbReference type="GO" id="GO:0004151">
    <property type="term" value="F:dihydroorotase activity"/>
    <property type="evidence" value="ECO:0007669"/>
    <property type="project" value="UniProtKB-UniRule"/>
</dbReference>
<dbReference type="GO" id="GO:0008270">
    <property type="term" value="F:zinc ion binding"/>
    <property type="evidence" value="ECO:0007669"/>
    <property type="project" value="UniProtKB-UniRule"/>
</dbReference>
<dbReference type="GO" id="GO:0006207">
    <property type="term" value="P:'de novo' pyrimidine nucleobase biosynthetic process"/>
    <property type="evidence" value="ECO:0007669"/>
    <property type="project" value="TreeGrafter"/>
</dbReference>
<dbReference type="GO" id="GO:0044205">
    <property type="term" value="P:'de novo' UMP biosynthetic process"/>
    <property type="evidence" value="ECO:0007669"/>
    <property type="project" value="UniProtKB-UniRule"/>
</dbReference>
<dbReference type="CDD" id="cd01294">
    <property type="entry name" value="DHOase"/>
    <property type="match status" value="1"/>
</dbReference>
<dbReference type="FunFam" id="3.20.20.140:FF:000006">
    <property type="entry name" value="Dihydroorotase"/>
    <property type="match status" value="1"/>
</dbReference>
<dbReference type="Gene3D" id="3.20.20.140">
    <property type="entry name" value="Metal-dependent hydrolases"/>
    <property type="match status" value="1"/>
</dbReference>
<dbReference type="HAMAP" id="MF_00219">
    <property type="entry name" value="PyrC_classII"/>
    <property type="match status" value="1"/>
</dbReference>
<dbReference type="InterPro" id="IPR006680">
    <property type="entry name" value="Amidohydro-rel"/>
</dbReference>
<dbReference type="InterPro" id="IPR004721">
    <property type="entry name" value="DHOdimr"/>
</dbReference>
<dbReference type="InterPro" id="IPR002195">
    <property type="entry name" value="Dihydroorotase_CS"/>
</dbReference>
<dbReference type="InterPro" id="IPR032466">
    <property type="entry name" value="Metal_Hydrolase"/>
</dbReference>
<dbReference type="NCBIfam" id="TIGR00856">
    <property type="entry name" value="pyrC_dimer"/>
    <property type="match status" value="1"/>
</dbReference>
<dbReference type="PANTHER" id="PTHR43137">
    <property type="entry name" value="DIHYDROOROTASE"/>
    <property type="match status" value="1"/>
</dbReference>
<dbReference type="PANTHER" id="PTHR43137:SF1">
    <property type="entry name" value="DIHYDROOROTASE"/>
    <property type="match status" value="1"/>
</dbReference>
<dbReference type="Pfam" id="PF01979">
    <property type="entry name" value="Amidohydro_1"/>
    <property type="match status" value="1"/>
</dbReference>
<dbReference type="PIRSF" id="PIRSF001237">
    <property type="entry name" value="DHOdimr"/>
    <property type="match status" value="1"/>
</dbReference>
<dbReference type="SUPFAM" id="SSF51556">
    <property type="entry name" value="Metallo-dependent hydrolases"/>
    <property type="match status" value="1"/>
</dbReference>
<dbReference type="PROSITE" id="PS00482">
    <property type="entry name" value="DIHYDROOROTASE_1"/>
    <property type="match status" value="1"/>
</dbReference>
<dbReference type="PROSITE" id="PS00483">
    <property type="entry name" value="DIHYDROOROTASE_2"/>
    <property type="match status" value="1"/>
</dbReference>